<evidence type="ECO:0000255" key="1">
    <source>
        <dbReference type="HAMAP-Rule" id="MF_00372"/>
    </source>
</evidence>
<accession>C0ZHT2</accession>
<gene>
    <name evidence="1" type="primary">hutI</name>
    <name type="ordered locus">BBR47_42290</name>
</gene>
<comment type="function">
    <text evidence="1">Catalyzes the hydrolytic cleavage of the carbon-nitrogen bond in imidazolone-5-propanoate to yield N-formimidoyl-L-glutamate. It is the third step in the universal histidine degradation pathway.</text>
</comment>
<comment type="catalytic activity">
    <reaction evidence="1">
        <text>4-imidazolone-5-propanoate + H2O = N-formimidoyl-L-glutamate</text>
        <dbReference type="Rhea" id="RHEA:23660"/>
        <dbReference type="ChEBI" id="CHEBI:15377"/>
        <dbReference type="ChEBI" id="CHEBI:58928"/>
        <dbReference type="ChEBI" id="CHEBI:77893"/>
        <dbReference type="EC" id="3.5.2.7"/>
    </reaction>
</comment>
<comment type="cofactor">
    <cofactor evidence="1">
        <name>Zn(2+)</name>
        <dbReference type="ChEBI" id="CHEBI:29105"/>
    </cofactor>
    <cofactor evidence="1">
        <name>Fe(3+)</name>
        <dbReference type="ChEBI" id="CHEBI:29034"/>
    </cofactor>
    <text evidence="1">Binds 1 zinc or iron ion per subunit.</text>
</comment>
<comment type="pathway">
    <text evidence="1">Amino-acid degradation; L-histidine degradation into L-glutamate; N-formimidoyl-L-glutamate from L-histidine: step 3/3.</text>
</comment>
<comment type="subcellular location">
    <subcellularLocation>
        <location evidence="1">Cytoplasm</location>
    </subcellularLocation>
</comment>
<comment type="similarity">
    <text evidence="1">Belongs to the metallo-dependent hydrolases superfamily. HutI family.</text>
</comment>
<proteinExistence type="inferred from homology"/>
<reference key="1">
    <citation type="submission" date="2005-03" db="EMBL/GenBank/DDBJ databases">
        <title>Brevibacillus brevis strain 47, complete genome.</title>
        <authorList>
            <person name="Hosoyama A."/>
            <person name="Yamada R."/>
            <person name="Hongo Y."/>
            <person name="Terui Y."/>
            <person name="Ankai A."/>
            <person name="Masuyama W."/>
            <person name="Sekiguchi M."/>
            <person name="Takeda T."/>
            <person name="Asano K."/>
            <person name="Ohji S."/>
            <person name="Ichikawa N."/>
            <person name="Narita S."/>
            <person name="Aoki N."/>
            <person name="Miura H."/>
            <person name="Matsushita S."/>
            <person name="Sekigawa T."/>
            <person name="Yamagata H."/>
            <person name="Yoshikawa H."/>
            <person name="Udaka S."/>
            <person name="Tanikawa S."/>
            <person name="Fujita N."/>
        </authorList>
    </citation>
    <scope>NUCLEOTIDE SEQUENCE [LARGE SCALE GENOMIC DNA]</scope>
    <source>
        <strain>47 / JCM 6285 / NBRC 100599</strain>
    </source>
</reference>
<protein>
    <recommendedName>
        <fullName evidence="1">Imidazolonepropionase</fullName>
        <ecNumber evidence="1">3.5.2.7</ecNumber>
    </recommendedName>
    <alternativeName>
        <fullName evidence="1">Imidazolone-5-propionate hydrolase</fullName>
    </alternativeName>
</protein>
<keyword id="KW-0963">Cytoplasm</keyword>
<keyword id="KW-0369">Histidine metabolism</keyword>
<keyword id="KW-0378">Hydrolase</keyword>
<keyword id="KW-0408">Iron</keyword>
<keyword id="KW-0479">Metal-binding</keyword>
<keyword id="KW-1185">Reference proteome</keyword>
<keyword id="KW-0862">Zinc</keyword>
<feature type="chain" id="PRO_1000133881" description="Imidazolonepropionase">
    <location>
        <begin position="1"/>
        <end position="424"/>
    </location>
</feature>
<feature type="binding site" evidence="1">
    <location>
        <position position="85"/>
    </location>
    <ligand>
        <name>Fe(3+)</name>
        <dbReference type="ChEBI" id="CHEBI:29034"/>
    </ligand>
</feature>
<feature type="binding site" evidence="1">
    <location>
        <position position="85"/>
    </location>
    <ligand>
        <name>Zn(2+)</name>
        <dbReference type="ChEBI" id="CHEBI:29105"/>
    </ligand>
</feature>
<feature type="binding site" evidence="1">
    <location>
        <position position="87"/>
    </location>
    <ligand>
        <name>Fe(3+)</name>
        <dbReference type="ChEBI" id="CHEBI:29034"/>
    </ligand>
</feature>
<feature type="binding site" evidence="1">
    <location>
        <position position="87"/>
    </location>
    <ligand>
        <name>Zn(2+)</name>
        <dbReference type="ChEBI" id="CHEBI:29105"/>
    </ligand>
</feature>
<feature type="binding site" evidence="1">
    <location>
        <position position="94"/>
    </location>
    <ligand>
        <name>4-imidazolone-5-propanoate</name>
        <dbReference type="ChEBI" id="CHEBI:77893"/>
    </ligand>
</feature>
<feature type="binding site" evidence="1">
    <location>
        <position position="157"/>
    </location>
    <ligand>
        <name>4-imidazolone-5-propanoate</name>
        <dbReference type="ChEBI" id="CHEBI:77893"/>
    </ligand>
</feature>
<feature type="binding site" evidence="1">
    <location>
        <position position="157"/>
    </location>
    <ligand>
        <name>N-formimidoyl-L-glutamate</name>
        <dbReference type="ChEBI" id="CHEBI:58928"/>
    </ligand>
</feature>
<feature type="binding site" evidence="1">
    <location>
        <position position="190"/>
    </location>
    <ligand>
        <name>4-imidazolone-5-propanoate</name>
        <dbReference type="ChEBI" id="CHEBI:77893"/>
    </ligand>
</feature>
<feature type="binding site" evidence="1">
    <location>
        <position position="255"/>
    </location>
    <ligand>
        <name>Fe(3+)</name>
        <dbReference type="ChEBI" id="CHEBI:29034"/>
    </ligand>
</feature>
<feature type="binding site" evidence="1">
    <location>
        <position position="255"/>
    </location>
    <ligand>
        <name>Zn(2+)</name>
        <dbReference type="ChEBI" id="CHEBI:29105"/>
    </ligand>
</feature>
<feature type="binding site" evidence="1">
    <location>
        <position position="258"/>
    </location>
    <ligand>
        <name>4-imidazolone-5-propanoate</name>
        <dbReference type="ChEBI" id="CHEBI:77893"/>
    </ligand>
</feature>
<feature type="binding site" evidence="1">
    <location>
        <position position="329"/>
    </location>
    <ligand>
        <name>Fe(3+)</name>
        <dbReference type="ChEBI" id="CHEBI:29034"/>
    </ligand>
</feature>
<feature type="binding site" evidence="1">
    <location>
        <position position="329"/>
    </location>
    <ligand>
        <name>Zn(2+)</name>
        <dbReference type="ChEBI" id="CHEBI:29105"/>
    </ligand>
</feature>
<feature type="binding site" evidence="1">
    <location>
        <position position="331"/>
    </location>
    <ligand>
        <name>N-formimidoyl-L-glutamate</name>
        <dbReference type="ChEBI" id="CHEBI:58928"/>
    </ligand>
</feature>
<feature type="binding site" evidence="1">
    <location>
        <position position="333"/>
    </location>
    <ligand>
        <name>N-formimidoyl-L-glutamate</name>
        <dbReference type="ChEBI" id="CHEBI:58928"/>
    </ligand>
</feature>
<feature type="binding site" evidence="1">
    <location>
        <position position="334"/>
    </location>
    <ligand>
        <name>4-imidazolone-5-propanoate</name>
        <dbReference type="ChEBI" id="CHEBI:77893"/>
    </ligand>
</feature>
<dbReference type="EC" id="3.5.2.7" evidence="1"/>
<dbReference type="EMBL" id="AP008955">
    <property type="protein sequence ID" value="BAH45206.1"/>
    <property type="molecule type" value="Genomic_DNA"/>
</dbReference>
<dbReference type="RefSeq" id="WP_015892472.1">
    <property type="nucleotide sequence ID" value="NC_012491.1"/>
</dbReference>
<dbReference type="SMR" id="C0ZHT2"/>
<dbReference type="STRING" id="358681.BBR47_42290"/>
<dbReference type="KEGG" id="bbe:BBR47_42290"/>
<dbReference type="eggNOG" id="COG1228">
    <property type="taxonomic scope" value="Bacteria"/>
</dbReference>
<dbReference type="HOGENOM" id="CLU_041647_0_1_9"/>
<dbReference type="UniPathway" id="UPA00379">
    <property type="reaction ID" value="UER00551"/>
</dbReference>
<dbReference type="Proteomes" id="UP000001877">
    <property type="component" value="Chromosome"/>
</dbReference>
<dbReference type="GO" id="GO:0005737">
    <property type="term" value="C:cytoplasm"/>
    <property type="evidence" value="ECO:0007669"/>
    <property type="project" value="UniProtKB-SubCell"/>
</dbReference>
<dbReference type="GO" id="GO:0050480">
    <property type="term" value="F:imidazolonepropionase activity"/>
    <property type="evidence" value="ECO:0007669"/>
    <property type="project" value="UniProtKB-UniRule"/>
</dbReference>
<dbReference type="GO" id="GO:0005506">
    <property type="term" value="F:iron ion binding"/>
    <property type="evidence" value="ECO:0007669"/>
    <property type="project" value="UniProtKB-UniRule"/>
</dbReference>
<dbReference type="GO" id="GO:0008270">
    <property type="term" value="F:zinc ion binding"/>
    <property type="evidence" value="ECO:0007669"/>
    <property type="project" value="UniProtKB-UniRule"/>
</dbReference>
<dbReference type="GO" id="GO:0019556">
    <property type="term" value="P:L-histidine catabolic process to glutamate and formamide"/>
    <property type="evidence" value="ECO:0007669"/>
    <property type="project" value="UniProtKB-UniPathway"/>
</dbReference>
<dbReference type="GO" id="GO:0019557">
    <property type="term" value="P:L-histidine catabolic process to glutamate and formate"/>
    <property type="evidence" value="ECO:0007669"/>
    <property type="project" value="UniProtKB-UniPathway"/>
</dbReference>
<dbReference type="CDD" id="cd01296">
    <property type="entry name" value="Imidazolone-5PH"/>
    <property type="match status" value="1"/>
</dbReference>
<dbReference type="FunFam" id="3.20.20.140:FF:000007">
    <property type="entry name" value="Imidazolonepropionase"/>
    <property type="match status" value="1"/>
</dbReference>
<dbReference type="Gene3D" id="3.20.20.140">
    <property type="entry name" value="Metal-dependent hydrolases"/>
    <property type="match status" value="1"/>
</dbReference>
<dbReference type="Gene3D" id="2.30.40.10">
    <property type="entry name" value="Urease, subunit C, domain 1"/>
    <property type="match status" value="1"/>
</dbReference>
<dbReference type="HAMAP" id="MF_00372">
    <property type="entry name" value="HutI"/>
    <property type="match status" value="1"/>
</dbReference>
<dbReference type="InterPro" id="IPR006680">
    <property type="entry name" value="Amidohydro-rel"/>
</dbReference>
<dbReference type="InterPro" id="IPR005920">
    <property type="entry name" value="HutI"/>
</dbReference>
<dbReference type="InterPro" id="IPR011059">
    <property type="entry name" value="Metal-dep_hydrolase_composite"/>
</dbReference>
<dbReference type="InterPro" id="IPR032466">
    <property type="entry name" value="Metal_Hydrolase"/>
</dbReference>
<dbReference type="NCBIfam" id="TIGR01224">
    <property type="entry name" value="hutI"/>
    <property type="match status" value="1"/>
</dbReference>
<dbReference type="PANTHER" id="PTHR42752">
    <property type="entry name" value="IMIDAZOLONEPROPIONASE"/>
    <property type="match status" value="1"/>
</dbReference>
<dbReference type="PANTHER" id="PTHR42752:SF1">
    <property type="entry name" value="IMIDAZOLONEPROPIONASE-RELATED"/>
    <property type="match status" value="1"/>
</dbReference>
<dbReference type="Pfam" id="PF01979">
    <property type="entry name" value="Amidohydro_1"/>
    <property type="match status" value="1"/>
</dbReference>
<dbReference type="SUPFAM" id="SSF51338">
    <property type="entry name" value="Composite domain of metallo-dependent hydrolases"/>
    <property type="match status" value="1"/>
</dbReference>
<dbReference type="SUPFAM" id="SSF51556">
    <property type="entry name" value="Metallo-dependent hydrolases"/>
    <property type="match status" value="1"/>
</dbReference>
<organism>
    <name type="scientific">Brevibacillus brevis (strain 47 / JCM 6285 / NBRC 100599)</name>
    <dbReference type="NCBI Taxonomy" id="358681"/>
    <lineage>
        <taxon>Bacteria</taxon>
        <taxon>Bacillati</taxon>
        <taxon>Bacillota</taxon>
        <taxon>Bacilli</taxon>
        <taxon>Bacillales</taxon>
        <taxon>Paenibacillaceae</taxon>
        <taxon>Brevibacillus</taxon>
    </lineage>
</organism>
<name>HUTI_BREBN</name>
<sequence length="424" mass="45811">MTKPVWIRHASQLATLAGGSSSPVVGAKMNELSIIEDGSIWLEDGVIQRVGTDEDLALHYRDRTHEAQIIDASGKLVTPGLIDPHTHLVHAGSRQNEFNMRLNGATYMEIMNNGGGIHSTTAATRAATHEELFAQSKQRLDQFLLHGVTTVEAKSGYGLTLEDELKQLEVAKQLNEAHPIDIVSTFMGAHAVPREYKENPDAFVDMVIEEMIPEVARRKLAVFNDVFCERGVFTPEQSRRILEAGVRHGLLPKIHADEIEPYEGAELAASVGAVSADHLLRASDKGIEQMAEAGVIAVLLPGTAFFLMAESANGRKMIDRGVAVAISTDCNPGSSPTVSLPLIMNLGCLKMGMTPAEVLTAATINAAHAIRCAHEVGSLEVGKKADVTIFDVPDFMTLQYRYGINHVNTVIKNGTIVVAEGRLA</sequence>